<proteinExistence type="inferred from homology"/>
<gene>
    <name type="primary">RRG9</name>
    <name type="ordered locus">KLTH0B07876g</name>
</gene>
<comment type="function">
    <text evidence="1">Required for respiratory activity and maintenance and expression of the mitochondrial genome.</text>
</comment>
<comment type="subcellular location">
    <subcellularLocation>
        <location evidence="1">Mitochondrion</location>
    </subcellularLocation>
</comment>
<comment type="similarity">
    <text evidence="4">Belongs to the RRG9 family.</text>
</comment>
<feature type="transit peptide" description="Mitochondrion" evidence="2">
    <location>
        <begin position="1"/>
        <end status="unknown"/>
    </location>
</feature>
<feature type="chain" id="PRO_0000407949" description="Required for respiratory growth protein 9, mitochondrial">
    <location>
        <begin status="unknown"/>
        <end position="223"/>
    </location>
</feature>
<feature type="region of interest" description="Disordered" evidence="3">
    <location>
        <begin position="166"/>
        <end position="223"/>
    </location>
</feature>
<name>RRG9_LACTC</name>
<reference key="1">
    <citation type="journal article" date="2009" name="Genome Res.">
        <title>Comparative genomics of protoploid Saccharomycetaceae.</title>
        <authorList>
            <consortium name="The Genolevures Consortium"/>
            <person name="Souciet J.-L."/>
            <person name="Dujon B."/>
            <person name="Gaillardin C."/>
            <person name="Johnston M."/>
            <person name="Baret P.V."/>
            <person name="Cliften P."/>
            <person name="Sherman D.J."/>
            <person name="Weissenbach J."/>
            <person name="Westhof E."/>
            <person name="Wincker P."/>
            <person name="Jubin C."/>
            <person name="Poulain J."/>
            <person name="Barbe V."/>
            <person name="Segurens B."/>
            <person name="Artiguenave F."/>
            <person name="Anthouard V."/>
            <person name="Vacherie B."/>
            <person name="Val M.-E."/>
            <person name="Fulton R.S."/>
            <person name="Minx P."/>
            <person name="Wilson R."/>
            <person name="Durrens P."/>
            <person name="Jean G."/>
            <person name="Marck C."/>
            <person name="Martin T."/>
            <person name="Nikolski M."/>
            <person name="Rolland T."/>
            <person name="Seret M.-L."/>
            <person name="Casaregola S."/>
            <person name="Despons L."/>
            <person name="Fairhead C."/>
            <person name="Fischer G."/>
            <person name="Lafontaine I."/>
            <person name="Leh V."/>
            <person name="Lemaire M."/>
            <person name="de Montigny J."/>
            <person name="Neuveglise C."/>
            <person name="Thierry A."/>
            <person name="Blanc-Lenfle I."/>
            <person name="Bleykasten C."/>
            <person name="Diffels J."/>
            <person name="Fritsch E."/>
            <person name="Frangeul L."/>
            <person name="Goeffon A."/>
            <person name="Jauniaux N."/>
            <person name="Kachouri-Lafond R."/>
            <person name="Payen C."/>
            <person name="Potier S."/>
            <person name="Pribylova L."/>
            <person name="Ozanne C."/>
            <person name="Richard G.-F."/>
            <person name="Sacerdot C."/>
            <person name="Straub M.-L."/>
            <person name="Talla E."/>
        </authorList>
    </citation>
    <scope>NUCLEOTIDE SEQUENCE [LARGE SCALE GENOMIC DNA]</scope>
    <source>
        <strain>ATCC 56472 / CBS 6340 / NRRL Y-8284</strain>
    </source>
</reference>
<evidence type="ECO:0000250" key="1"/>
<evidence type="ECO:0000255" key="2"/>
<evidence type="ECO:0000256" key="3">
    <source>
        <dbReference type="SAM" id="MobiDB-lite"/>
    </source>
</evidence>
<evidence type="ECO:0000305" key="4"/>
<sequence>MKPVLQGALAWIYAGYKTASRGHLLPYTRHQKFHSSSLISEQAKRAKDLIKLVNSSSLSNSESQSLDWRSDLKVPEWKRQKLALKDKFKGQQWNPKKKLSREQMENVRLLKRHFPETSATELSERFQVSPEVIRRILKSKWQPNEEEQLQLQTRWKRRSERVNEILGSPEHQKLPPKKLVLGSGRTDTDLQVKSVRRTAVKAGRNSSSPKGKQKLNLLSKLIS</sequence>
<organism>
    <name type="scientific">Lachancea thermotolerans (strain ATCC 56472 / CBS 6340 / NRRL Y-8284)</name>
    <name type="common">Yeast</name>
    <name type="synonym">Kluyveromyces thermotolerans</name>
    <dbReference type="NCBI Taxonomy" id="559295"/>
    <lineage>
        <taxon>Eukaryota</taxon>
        <taxon>Fungi</taxon>
        <taxon>Dikarya</taxon>
        <taxon>Ascomycota</taxon>
        <taxon>Saccharomycotina</taxon>
        <taxon>Saccharomycetes</taxon>
        <taxon>Saccharomycetales</taxon>
        <taxon>Saccharomycetaceae</taxon>
        <taxon>Lachancea</taxon>
    </lineage>
</organism>
<protein>
    <recommendedName>
        <fullName>Required for respiratory growth protein 9, mitochondrial</fullName>
    </recommendedName>
</protein>
<accession>C5DD31</accession>
<keyword id="KW-0496">Mitochondrion</keyword>
<keyword id="KW-1185">Reference proteome</keyword>
<keyword id="KW-0809">Transit peptide</keyword>
<dbReference type="EMBL" id="CU928166">
    <property type="protein sequence ID" value="CAR21692.1"/>
    <property type="molecule type" value="Genomic_DNA"/>
</dbReference>
<dbReference type="RefSeq" id="XP_002552130.1">
    <property type="nucleotide sequence ID" value="XM_002552084.1"/>
</dbReference>
<dbReference type="SMR" id="C5DD31"/>
<dbReference type="FunCoup" id="C5DD31">
    <property type="interactions" value="43"/>
</dbReference>
<dbReference type="STRING" id="559295.C5DD31"/>
<dbReference type="GeneID" id="8290970"/>
<dbReference type="KEGG" id="lth:KLTH0B07876g"/>
<dbReference type="eggNOG" id="ENOG502S7IA">
    <property type="taxonomic scope" value="Eukaryota"/>
</dbReference>
<dbReference type="HOGENOM" id="CLU_100293_0_0_1"/>
<dbReference type="InParanoid" id="C5DD31"/>
<dbReference type="OMA" id="WREDTKI"/>
<dbReference type="OrthoDB" id="5578174at2759"/>
<dbReference type="Proteomes" id="UP000002036">
    <property type="component" value="Chromosome B"/>
</dbReference>
<dbReference type="GO" id="GO:0005739">
    <property type="term" value="C:mitochondrion"/>
    <property type="evidence" value="ECO:0007669"/>
    <property type="project" value="UniProtKB-SubCell"/>
</dbReference>
<dbReference type="GO" id="GO:0005634">
    <property type="term" value="C:nucleus"/>
    <property type="evidence" value="ECO:0007669"/>
    <property type="project" value="TreeGrafter"/>
</dbReference>
<dbReference type="InterPro" id="IPR010487">
    <property type="entry name" value="NGRN/Rrg9"/>
</dbReference>
<dbReference type="PANTHER" id="PTHR13475">
    <property type="entry name" value="NEUGRIN"/>
    <property type="match status" value="1"/>
</dbReference>
<dbReference type="PANTHER" id="PTHR13475:SF3">
    <property type="entry name" value="NEUGRIN"/>
    <property type="match status" value="1"/>
</dbReference>
<dbReference type="Pfam" id="PF06413">
    <property type="entry name" value="Neugrin"/>
    <property type="match status" value="1"/>
</dbReference>